<dbReference type="EC" id="3.1.3.-" evidence="1"/>
<dbReference type="EMBL" id="CP000507">
    <property type="protein sequence ID" value="ABM00439.1"/>
    <property type="molecule type" value="Genomic_DNA"/>
</dbReference>
<dbReference type="RefSeq" id="WP_011760346.1">
    <property type="nucleotide sequence ID" value="NC_008700.1"/>
</dbReference>
<dbReference type="SMR" id="A1S7T2"/>
<dbReference type="STRING" id="326297.Sama_2233"/>
<dbReference type="KEGG" id="saz:Sama_2233"/>
<dbReference type="eggNOG" id="COG1387">
    <property type="taxonomic scope" value="Bacteria"/>
</dbReference>
<dbReference type="HOGENOM" id="CLU_061999_0_1_6"/>
<dbReference type="OrthoDB" id="9808747at2"/>
<dbReference type="Proteomes" id="UP000009175">
    <property type="component" value="Chromosome"/>
</dbReference>
<dbReference type="GO" id="GO:0005829">
    <property type="term" value="C:cytosol"/>
    <property type="evidence" value="ECO:0007669"/>
    <property type="project" value="TreeGrafter"/>
</dbReference>
<dbReference type="GO" id="GO:0016791">
    <property type="term" value="F:phosphatase activity"/>
    <property type="evidence" value="ECO:0007669"/>
    <property type="project" value="UniProtKB-UniRule"/>
</dbReference>
<dbReference type="GO" id="GO:0008270">
    <property type="term" value="F:zinc ion binding"/>
    <property type="evidence" value="ECO:0007669"/>
    <property type="project" value="UniProtKB-UniRule"/>
</dbReference>
<dbReference type="GO" id="GO:0071978">
    <property type="term" value="P:bacterial-type flagellum-dependent swarming motility"/>
    <property type="evidence" value="ECO:0007669"/>
    <property type="project" value="TreeGrafter"/>
</dbReference>
<dbReference type="CDD" id="cd07437">
    <property type="entry name" value="PHP_HisPPase_Ycdx_like"/>
    <property type="match status" value="1"/>
</dbReference>
<dbReference type="FunFam" id="3.20.20.140:FF:000008">
    <property type="entry name" value="Probable phosphatase YcdX"/>
    <property type="match status" value="1"/>
</dbReference>
<dbReference type="Gene3D" id="3.20.20.140">
    <property type="entry name" value="Metal-dependent hydrolases"/>
    <property type="match status" value="1"/>
</dbReference>
<dbReference type="HAMAP" id="MF_01561">
    <property type="entry name" value="YcdX_phosphat"/>
    <property type="match status" value="1"/>
</dbReference>
<dbReference type="InterPro" id="IPR023710">
    <property type="entry name" value="Phosphatase_YcdX_put"/>
</dbReference>
<dbReference type="InterPro" id="IPR004013">
    <property type="entry name" value="PHP_dom"/>
</dbReference>
<dbReference type="InterPro" id="IPR050243">
    <property type="entry name" value="PHP_phosphatase"/>
</dbReference>
<dbReference type="InterPro" id="IPR003141">
    <property type="entry name" value="Pol/His_phosphatase_N"/>
</dbReference>
<dbReference type="InterPro" id="IPR016195">
    <property type="entry name" value="Pol/histidinol_Pase-like"/>
</dbReference>
<dbReference type="NCBIfam" id="NF006702">
    <property type="entry name" value="PRK09248.1"/>
    <property type="match status" value="1"/>
</dbReference>
<dbReference type="PANTHER" id="PTHR36928">
    <property type="entry name" value="PHOSPHATASE YCDX-RELATED"/>
    <property type="match status" value="1"/>
</dbReference>
<dbReference type="PANTHER" id="PTHR36928:SF1">
    <property type="entry name" value="PHOSPHATASE YCDX-RELATED"/>
    <property type="match status" value="1"/>
</dbReference>
<dbReference type="Pfam" id="PF02811">
    <property type="entry name" value="PHP"/>
    <property type="match status" value="1"/>
</dbReference>
<dbReference type="SMART" id="SM00481">
    <property type="entry name" value="POLIIIAc"/>
    <property type="match status" value="1"/>
</dbReference>
<dbReference type="SUPFAM" id="SSF89550">
    <property type="entry name" value="PHP domain-like"/>
    <property type="match status" value="1"/>
</dbReference>
<accession>A1S7T2</accession>
<organism>
    <name type="scientific">Shewanella amazonensis (strain ATCC BAA-1098 / SB2B)</name>
    <dbReference type="NCBI Taxonomy" id="326297"/>
    <lineage>
        <taxon>Bacteria</taxon>
        <taxon>Pseudomonadati</taxon>
        <taxon>Pseudomonadota</taxon>
        <taxon>Gammaproteobacteria</taxon>
        <taxon>Alteromonadales</taxon>
        <taxon>Shewanellaceae</taxon>
        <taxon>Shewanella</taxon>
    </lineage>
</organism>
<keyword id="KW-0378">Hydrolase</keyword>
<keyword id="KW-0479">Metal-binding</keyword>
<keyword id="KW-1185">Reference proteome</keyword>
<keyword id="KW-0862">Zinc</keyword>
<reference key="1">
    <citation type="submission" date="2006-12" db="EMBL/GenBank/DDBJ databases">
        <title>Complete sequence of Shewanella amazonensis SB2B.</title>
        <authorList>
            <consortium name="US DOE Joint Genome Institute"/>
            <person name="Copeland A."/>
            <person name="Lucas S."/>
            <person name="Lapidus A."/>
            <person name="Barry K."/>
            <person name="Detter J.C."/>
            <person name="Glavina del Rio T."/>
            <person name="Hammon N."/>
            <person name="Israni S."/>
            <person name="Dalin E."/>
            <person name="Tice H."/>
            <person name="Pitluck S."/>
            <person name="Munk A.C."/>
            <person name="Brettin T."/>
            <person name="Bruce D."/>
            <person name="Han C."/>
            <person name="Tapia R."/>
            <person name="Gilna P."/>
            <person name="Schmutz J."/>
            <person name="Larimer F."/>
            <person name="Land M."/>
            <person name="Hauser L."/>
            <person name="Kyrpides N."/>
            <person name="Mikhailova N."/>
            <person name="Fredrickson J."/>
            <person name="Richardson P."/>
        </authorList>
    </citation>
    <scope>NUCLEOTIDE SEQUENCE [LARGE SCALE GENOMIC DNA]</scope>
    <source>
        <strain>ATCC BAA-1098 / SB2B</strain>
    </source>
</reference>
<feature type="chain" id="PRO_1000069024" description="Probable phosphatase Sama_2233">
    <location>
        <begin position="1"/>
        <end position="251"/>
    </location>
</feature>
<feature type="binding site" evidence="1">
    <location>
        <position position="8"/>
    </location>
    <ligand>
        <name>Zn(2+)</name>
        <dbReference type="ChEBI" id="CHEBI:29105"/>
        <label>1</label>
    </ligand>
</feature>
<feature type="binding site" evidence="1">
    <location>
        <position position="10"/>
    </location>
    <ligand>
        <name>Zn(2+)</name>
        <dbReference type="ChEBI" id="CHEBI:29105"/>
        <label>1</label>
    </ligand>
</feature>
<feature type="binding site" evidence="1">
    <location>
        <position position="16"/>
    </location>
    <ligand>
        <name>Zn(2+)</name>
        <dbReference type="ChEBI" id="CHEBI:29105"/>
        <label>2</label>
    </ligand>
</feature>
<feature type="binding site" evidence="1">
    <location>
        <position position="41"/>
    </location>
    <ligand>
        <name>Zn(2+)</name>
        <dbReference type="ChEBI" id="CHEBI:29105"/>
        <label>2</label>
    </ligand>
</feature>
<feature type="binding site" evidence="1">
    <location>
        <position position="74"/>
    </location>
    <ligand>
        <name>Zn(2+)</name>
        <dbReference type="ChEBI" id="CHEBI:29105"/>
        <label>1</label>
    </ligand>
</feature>
<feature type="binding site" evidence="1">
    <location>
        <position position="74"/>
    </location>
    <ligand>
        <name>Zn(2+)</name>
        <dbReference type="ChEBI" id="CHEBI:29105"/>
        <label>3</label>
    </ligand>
</feature>
<feature type="binding site" evidence="1">
    <location>
        <position position="102"/>
    </location>
    <ligand>
        <name>Zn(2+)</name>
        <dbReference type="ChEBI" id="CHEBI:29105"/>
        <label>3</label>
    </ligand>
</feature>
<feature type="binding site" evidence="1">
    <location>
        <position position="132"/>
    </location>
    <ligand>
        <name>Zn(2+)</name>
        <dbReference type="ChEBI" id="CHEBI:29105"/>
        <label>3</label>
    </ligand>
</feature>
<feature type="binding site" evidence="1">
    <location>
        <position position="193"/>
    </location>
    <ligand>
        <name>Zn(2+)</name>
        <dbReference type="ChEBI" id="CHEBI:29105"/>
        <label>1</label>
    </ligand>
</feature>
<feature type="binding site" evidence="1">
    <location>
        <position position="195"/>
    </location>
    <ligand>
        <name>Zn(2+)</name>
        <dbReference type="ChEBI" id="CHEBI:29105"/>
        <label>2</label>
    </ligand>
</feature>
<evidence type="ECO:0000255" key="1">
    <source>
        <dbReference type="HAMAP-Rule" id="MF_01561"/>
    </source>
</evidence>
<sequence>MQFPVDTHSHTVASTHAYSTIHDYLAVAKEKGIRLFATTDHGPAMKDAPHFWHFVNLRVLPRIWNGVGILRGIEANIMNEKGEIDYFGEYLSELDLVQAGFHEPVFAPADRLTHTRAMIATMESGLVDIITHPGNPAYPIDVEAVVGAAKACNVALEINNSSFTASRKGSEENCLAIARMATKLDAQLVMGSDAHVAFDLGGFDRSLAIVDAADYPRQRLLNESPMALLHFLQQRGHQHLDELIRYFRPVL</sequence>
<gene>
    <name type="ordered locus">Sama_2233</name>
</gene>
<name>Y2233_SHEAM</name>
<protein>
    <recommendedName>
        <fullName evidence="1">Probable phosphatase Sama_2233</fullName>
        <ecNumber evidence="1">3.1.3.-</ecNumber>
    </recommendedName>
</protein>
<proteinExistence type="inferred from homology"/>
<comment type="cofactor">
    <cofactor evidence="1">
        <name>Zn(2+)</name>
        <dbReference type="ChEBI" id="CHEBI:29105"/>
    </cofactor>
    <text evidence="1">Binds 3 Zn(2+) ions per subunit.</text>
</comment>
<comment type="similarity">
    <text evidence="1">Belongs to the PHP family.</text>
</comment>